<organism>
    <name type="scientific">Coccidioides immitis (strain RS)</name>
    <name type="common">Valley fever fungus</name>
    <dbReference type="NCBI Taxonomy" id="246410"/>
    <lineage>
        <taxon>Eukaryota</taxon>
        <taxon>Fungi</taxon>
        <taxon>Dikarya</taxon>
        <taxon>Ascomycota</taxon>
        <taxon>Pezizomycotina</taxon>
        <taxon>Eurotiomycetes</taxon>
        <taxon>Eurotiomycetidae</taxon>
        <taxon>Onygenales</taxon>
        <taxon>Onygenaceae</taxon>
        <taxon>Coccidioides</taxon>
    </lineage>
</organism>
<sequence>MTLFILTETSAGYALLKAKDKKLLKRDDLEKETQTAEGVSNLLKLKNFQKFDSATTALEEVASLVEGKVTPRLASLLESIKDEKKVSLAVADPKLGNAIGKLPGLSIQAIADSTTADLYRAIRAHLPTLIPGLLPTDMSTMALGLSHSLARHKLKFSPDKIDTMIVQAIALLDDLDKELNTYAMRVKEWYGWHFPEMAKILNDNMAYAKVVLKMGMRSNSDSADLSEILPEEIEGAVKAAANRSMGTDISNEDLENIQCLAEQVVGFAEYRQQLASYLTARMTAIAPNLTALVGELVGARLIAHAGSLVNLSKSPASTIQILGAEKALFRALKTKHDTPKYGLIYHASLIGQATGKNKGKMARVLAAKAAIGLRVDALAEWEKDADGNEPTEEERAALGMESRYYLEKKLAAMEGKPLKPRGVGIAPNGIPIEQPKKWDIKEARKHNPDADGLTGDEPAATENVSKKSKKDKKLVEEIKDEEMKDAPESEEEEEASEAEESEEEKPKKSKKKESKTSKGKDSDEAKIEELAEKAGLSVKRYLRKLERGEINFDEDGNPTAISKKELKKAKKEAKKAEKDAGKKRKRDEDEEPAESKSEKKKKKKSKA</sequence>
<protein>
    <recommendedName>
        <fullName>Nucleolar protein 58</fullName>
    </recommendedName>
</protein>
<name>NOP58_COCIM</name>
<proteinExistence type="inferred from homology"/>
<accession>Q1E1Q5</accession>
<accession>A0A0D6K9P2</accession>
<accession>J3KBU1</accession>
<keyword id="KW-0539">Nucleus</keyword>
<keyword id="KW-1185">Reference proteome</keyword>
<keyword id="KW-0687">Ribonucleoprotein</keyword>
<keyword id="KW-0690">Ribosome biogenesis</keyword>
<keyword id="KW-0698">rRNA processing</keyword>
<comment type="function">
    <text evidence="1">Required for pre-18S rRNA processing. May bind microtubules (By similarity).</text>
</comment>
<comment type="subcellular location">
    <subcellularLocation>
        <location evidence="1">Nucleus</location>
        <location evidence="1">Nucleolus</location>
    </subcellularLocation>
</comment>
<comment type="similarity">
    <text evidence="4">Belongs to the NOP5/NOP56 family.</text>
</comment>
<evidence type="ECO:0000250" key="1"/>
<evidence type="ECO:0000255" key="2">
    <source>
        <dbReference type="PROSITE-ProRule" id="PRU00690"/>
    </source>
</evidence>
<evidence type="ECO:0000256" key="3">
    <source>
        <dbReference type="SAM" id="MobiDB-lite"/>
    </source>
</evidence>
<evidence type="ECO:0000305" key="4"/>
<dbReference type="EMBL" id="GG704916">
    <property type="protein sequence ID" value="EAS32484.1"/>
    <property type="molecule type" value="Genomic_DNA"/>
</dbReference>
<dbReference type="RefSeq" id="XP_001244067.1">
    <property type="nucleotide sequence ID" value="XM_001244066.2"/>
</dbReference>
<dbReference type="SMR" id="Q1E1Q5"/>
<dbReference type="FunCoup" id="Q1E1Q5">
    <property type="interactions" value="1503"/>
</dbReference>
<dbReference type="STRING" id="246410.Q1E1Q5"/>
<dbReference type="GeneID" id="4564539"/>
<dbReference type="KEGG" id="cim:CIMG_03508"/>
<dbReference type="VEuPathDB" id="FungiDB:CIMG_03508"/>
<dbReference type="InParanoid" id="Q1E1Q5"/>
<dbReference type="OMA" id="MGMRSNW"/>
<dbReference type="OrthoDB" id="6780543at2759"/>
<dbReference type="Proteomes" id="UP000001261">
    <property type="component" value="Unassembled WGS sequence"/>
</dbReference>
<dbReference type="GO" id="GO:0031428">
    <property type="term" value="C:box C/D methylation guide snoRNP complex"/>
    <property type="evidence" value="ECO:0007669"/>
    <property type="project" value="InterPro"/>
</dbReference>
<dbReference type="GO" id="GO:0005730">
    <property type="term" value="C:nucleolus"/>
    <property type="evidence" value="ECO:0007669"/>
    <property type="project" value="UniProtKB-SubCell"/>
</dbReference>
<dbReference type="GO" id="GO:0032040">
    <property type="term" value="C:small-subunit processome"/>
    <property type="evidence" value="ECO:0007669"/>
    <property type="project" value="InterPro"/>
</dbReference>
<dbReference type="GO" id="GO:0030515">
    <property type="term" value="F:snoRNA binding"/>
    <property type="evidence" value="ECO:0007669"/>
    <property type="project" value="InterPro"/>
</dbReference>
<dbReference type="GO" id="GO:0006364">
    <property type="term" value="P:rRNA processing"/>
    <property type="evidence" value="ECO:0007669"/>
    <property type="project" value="UniProtKB-KW"/>
</dbReference>
<dbReference type="FunFam" id="1.10.246.90:FF:000003">
    <property type="entry name" value="Nucleolar protein 58"/>
    <property type="match status" value="1"/>
</dbReference>
<dbReference type="FunFam" id="1.10.287.4070:FF:000001">
    <property type="entry name" value="Probable Nucleolar protein 58"/>
    <property type="match status" value="1"/>
</dbReference>
<dbReference type="Gene3D" id="1.10.287.4070">
    <property type="match status" value="1"/>
</dbReference>
<dbReference type="Gene3D" id="1.10.246.90">
    <property type="entry name" value="Nop domain"/>
    <property type="match status" value="1"/>
</dbReference>
<dbReference type="InterPro" id="IPR045056">
    <property type="entry name" value="Nop56/Nop58"/>
</dbReference>
<dbReference type="InterPro" id="IPR012974">
    <property type="entry name" value="NOP58/56_N"/>
</dbReference>
<dbReference type="InterPro" id="IPR042239">
    <property type="entry name" value="Nop_C"/>
</dbReference>
<dbReference type="InterPro" id="IPR002687">
    <property type="entry name" value="Nop_dom"/>
</dbReference>
<dbReference type="InterPro" id="IPR036070">
    <property type="entry name" value="Nop_dom_sf"/>
</dbReference>
<dbReference type="InterPro" id="IPR012976">
    <property type="entry name" value="NOSIC"/>
</dbReference>
<dbReference type="PANTHER" id="PTHR10894">
    <property type="entry name" value="NUCLEOLAR PROTEIN 5 NUCLEOLAR PROTEIN NOP5 NOP58"/>
    <property type="match status" value="1"/>
</dbReference>
<dbReference type="PANTHER" id="PTHR10894:SF1">
    <property type="entry name" value="NUCLEOLAR PROTEIN 58"/>
    <property type="match status" value="1"/>
</dbReference>
<dbReference type="Pfam" id="PF01798">
    <property type="entry name" value="Nop"/>
    <property type="match status" value="1"/>
</dbReference>
<dbReference type="Pfam" id="PF08156">
    <property type="entry name" value="NOP5NT"/>
    <property type="match status" value="1"/>
</dbReference>
<dbReference type="SMART" id="SM00931">
    <property type="entry name" value="NOSIC"/>
    <property type="match status" value="1"/>
</dbReference>
<dbReference type="SUPFAM" id="SSF89124">
    <property type="entry name" value="Nop domain"/>
    <property type="match status" value="1"/>
</dbReference>
<dbReference type="PROSITE" id="PS51358">
    <property type="entry name" value="NOP"/>
    <property type="match status" value="1"/>
</dbReference>
<reference key="1">
    <citation type="journal article" date="2009" name="Genome Res.">
        <title>Comparative genomic analyses of the human fungal pathogens Coccidioides and their relatives.</title>
        <authorList>
            <person name="Sharpton T.J."/>
            <person name="Stajich J.E."/>
            <person name="Rounsley S.D."/>
            <person name="Gardner M.J."/>
            <person name="Wortman J.R."/>
            <person name="Jordar V.S."/>
            <person name="Maiti R."/>
            <person name="Kodira C.D."/>
            <person name="Neafsey D.E."/>
            <person name="Zeng Q."/>
            <person name="Hung C.-Y."/>
            <person name="McMahan C."/>
            <person name="Muszewska A."/>
            <person name="Grynberg M."/>
            <person name="Mandel M.A."/>
            <person name="Kellner E.M."/>
            <person name="Barker B.M."/>
            <person name="Galgiani J.N."/>
            <person name="Orbach M.J."/>
            <person name="Kirkland T.N."/>
            <person name="Cole G.T."/>
            <person name="Henn M.R."/>
            <person name="Birren B.W."/>
            <person name="Taylor J.W."/>
        </authorList>
    </citation>
    <scope>NUCLEOTIDE SEQUENCE [LARGE SCALE GENOMIC DNA]</scope>
    <source>
        <strain>RS</strain>
    </source>
</reference>
<reference key="2">
    <citation type="journal article" date="2010" name="Genome Res.">
        <title>Population genomic sequencing of Coccidioides fungi reveals recent hybridization and transposon control.</title>
        <authorList>
            <person name="Neafsey D.E."/>
            <person name="Barker B.M."/>
            <person name="Sharpton T.J."/>
            <person name="Stajich J.E."/>
            <person name="Park D.J."/>
            <person name="Whiston E."/>
            <person name="Hung C.-Y."/>
            <person name="McMahan C."/>
            <person name="White J."/>
            <person name="Sykes S."/>
            <person name="Heiman D."/>
            <person name="Young S."/>
            <person name="Zeng Q."/>
            <person name="Abouelleil A."/>
            <person name="Aftuck L."/>
            <person name="Bessette D."/>
            <person name="Brown A."/>
            <person name="FitzGerald M."/>
            <person name="Lui A."/>
            <person name="Macdonald J.P."/>
            <person name="Priest M."/>
            <person name="Orbach M.J."/>
            <person name="Galgiani J.N."/>
            <person name="Kirkland T.N."/>
            <person name="Cole G.T."/>
            <person name="Birren B.W."/>
            <person name="Henn M.R."/>
            <person name="Taylor J.W."/>
            <person name="Rounsley S.D."/>
        </authorList>
    </citation>
    <scope>GENOME REANNOTATION</scope>
    <source>
        <strain>RS</strain>
    </source>
</reference>
<feature type="chain" id="PRO_0000350981" description="Nucleolar protein 58">
    <location>
        <begin position="1"/>
        <end position="607"/>
    </location>
</feature>
<feature type="domain" description="Nop" evidence="2">
    <location>
        <begin position="285"/>
        <end position="415"/>
    </location>
</feature>
<feature type="region of interest" description="Disordered" evidence="3">
    <location>
        <begin position="419"/>
        <end position="438"/>
    </location>
</feature>
<feature type="region of interest" description="Disordered" evidence="3">
    <location>
        <begin position="446"/>
        <end position="607"/>
    </location>
</feature>
<feature type="compositionally biased region" description="Basic and acidic residues" evidence="3">
    <location>
        <begin position="473"/>
        <end position="487"/>
    </location>
</feature>
<feature type="compositionally biased region" description="Acidic residues" evidence="3">
    <location>
        <begin position="488"/>
        <end position="503"/>
    </location>
</feature>
<feature type="compositionally biased region" description="Basic and acidic residues" evidence="3">
    <location>
        <begin position="514"/>
        <end position="532"/>
    </location>
</feature>
<feature type="compositionally biased region" description="Basic residues" evidence="3">
    <location>
        <begin position="598"/>
        <end position="607"/>
    </location>
</feature>
<gene>
    <name type="primary">NOP58</name>
    <name type="ORF">CIMG_03508</name>
</gene>